<dbReference type="EMBL" id="CP000724">
    <property type="protein sequence ID" value="ABR47805.1"/>
    <property type="molecule type" value="Genomic_DNA"/>
</dbReference>
<dbReference type="RefSeq" id="WP_012062843.1">
    <property type="nucleotide sequence ID" value="NC_009633.1"/>
</dbReference>
<dbReference type="SMR" id="A6TNN7"/>
<dbReference type="STRING" id="293826.Amet_1628"/>
<dbReference type="KEGG" id="amt:Amet_1628"/>
<dbReference type="eggNOG" id="COG1281">
    <property type="taxonomic scope" value="Bacteria"/>
</dbReference>
<dbReference type="HOGENOM" id="CLU_054493_1_0_9"/>
<dbReference type="OrthoDB" id="9776534at2"/>
<dbReference type="Proteomes" id="UP000001572">
    <property type="component" value="Chromosome"/>
</dbReference>
<dbReference type="GO" id="GO:0005737">
    <property type="term" value="C:cytoplasm"/>
    <property type="evidence" value="ECO:0007669"/>
    <property type="project" value="UniProtKB-SubCell"/>
</dbReference>
<dbReference type="GO" id="GO:0044183">
    <property type="term" value="F:protein folding chaperone"/>
    <property type="evidence" value="ECO:0007669"/>
    <property type="project" value="TreeGrafter"/>
</dbReference>
<dbReference type="GO" id="GO:0051082">
    <property type="term" value="F:unfolded protein binding"/>
    <property type="evidence" value="ECO:0007669"/>
    <property type="project" value="UniProtKB-UniRule"/>
</dbReference>
<dbReference type="GO" id="GO:0042026">
    <property type="term" value="P:protein refolding"/>
    <property type="evidence" value="ECO:0007669"/>
    <property type="project" value="TreeGrafter"/>
</dbReference>
<dbReference type="CDD" id="cd00498">
    <property type="entry name" value="Hsp33"/>
    <property type="match status" value="1"/>
</dbReference>
<dbReference type="Gene3D" id="3.55.30.10">
    <property type="entry name" value="Hsp33 domain"/>
    <property type="match status" value="1"/>
</dbReference>
<dbReference type="Gene3D" id="3.90.1280.10">
    <property type="entry name" value="HSP33 redox switch-like"/>
    <property type="match status" value="1"/>
</dbReference>
<dbReference type="HAMAP" id="MF_00117">
    <property type="entry name" value="HslO"/>
    <property type="match status" value="1"/>
</dbReference>
<dbReference type="InterPro" id="IPR000397">
    <property type="entry name" value="Heat_shock_Hsp33"/>
</dbReference>
<dbReference type="InterPro" id="IPR016154">
    <property type="entry name" value="Heat_shock_Hsp33_C"/>
</dbReference>
<dbReference type="InterPro" id="IPR016153">
    <property type="entry name" value="Heat_shock_Hsp33_N"/>
</dbReference>
<dbReference type="NCBIfam" id="NF001033">
    <property type="entry name" value="PRK00114.1"/>
    <property type="match status" value="1"/>
</dbReference>
<dbReference type="PANTHER" id="PTHR30111">
    <property type="entry name" value="33 KDA CHAPERONIN"/>
    <property type="match status" value="1"/>
</dbReference>
<dbReference type="PANTHER" id="PTHR30111:SF1">
    <property type="entry name" value="33 KDA CHAPERONIN"/>
    <property type="match status" value="1"/>
</dbReference>
<dbReference type="Pfam" id="PF01430">
    <property type="entry name" value="HSP33"/>
    <property type="match status" value="1"/>
</dbReference>
<dbReference type="PIRSF" id="PIRSF005261">
    <property type="entry name" value="Heat_shock_Hsp33"/>
    <property type="match status" value="1"/>
</dbReference>
<dbReference type="SUPFAM" id="SSF64397">
    <property type="entry name" value="Hsp33 domain"/>
    <property type="match status" value="1"/>
</dbReference>
<dbReference type="SUPFAM" id="SSF118352">
    <property type="entry name" value="HSP33 redox switch-like"/>
    <property type="match status" value="1"/>
</dbReference>
<comment type="function">
    <text evidence="1">Redox regulated molecular chaperone. Protects both thermally unfolding and oxidatively damaged proteins from irreversible aggregation. Plays an important role in the bacterial defense system toward oxidative stress.</text>
</comment>
<comment type="subcellular location">
    <subcellularLocation>
        <location evidence="1">Cytoplasm</location>
    </subcellularLocation>
</comment>
<comment type="PTM">
    <text evidence="1">Under oxidizing conditions two disulfide bonds are formed involving the reactive cysteines. Under reducing conditions zinc is bound to the reactive cysteines and the protein is inactive.</text>
</comment>
<comment type="similarity">
    <text evidence="1">Belongs to the HSP33 family.</text>
</comment>
<sequence>MSSRIIRATAANSSIRAFVANTTNLVEKARGFHQTSPVASAALGRTLTATSMMGVMLKGEKQKITTKINGGGPLGVILVVGDSEGNVKGYVGNPQVESTNIRPGKLDVGAAVGSDGEITVIKDLGMKKPYVGTAPLVSGEIGEDFATYFLNSEQQPSAVSLGVLIDIDYRIKASGGFIIQVLPNVQEAVLAKLESRIGQLESITVMMEQGMNEVDILNHVLEGMDPKIVETYEVDFECDCNVARFEKGLISIGRQEIREMIEEDENTELVCHFCNKKYHFNKEQLQGLLDEM</sequence>
<organism>
    <name type="scientific">Alkaliphilus metalliredigens (strain QYMF)</name>
    <dbReference type="NCBI Taxonomy" id="293826"/>
    <lineage>
        <taxon>Bacteria</taxon>
        <taxon>Bacillati</taxon>
        <taxon>Bacillota</taxon>
        <taxon>Clostridia</taxon>
        <taxon>Peptostreptococcales</taxon>
        <taxon>Natronincolaceae</taxon>
        <taxon>Alkaliphilus</taxon>
    </lineage>
</organism>
<evidence type="ECO:0000255" key="1">
    <source>
        <dbReference type="HAMAP-Rule" id="MF_00117"/>
    </source>
</evidence>
<accession>A6TNN7</accession>
<keyword id="KW-0143">Chaperone</keyword>
<keyword id="KW-0963">Cytoplasm</keyword>
<keyword id="KW-1015">Disulfide bond</keyword>
<keyword id="KW-0676">Redox-active center</keyword>
<keyword id="KW-1185">Reference proteome</keyword>
<keyword id="KW-0862">Zinc</keyword>
<gene>
    <name evidence="1" type="primary">hslO</name>
    <name type="ordered locus">Amet_1628</name>
</gene>
<reference key="1">
    <citation type="journal article" date="2016" name="Genome Announc.">
        <title>Complete genome sequence of Alkaliphilus metalliredigens strain QYMF, an alkaliphilic and metal-reducing bacterium isolated from borax-contaminated leachate ponds.</title>
        <authorList>
            <person name="Hwang C."/>
            <person name="Copeland A."/>
            <person name="Lucas S."/>
            <person name="Lapidus A."/>
            <person name="Barry K."/>
            <person name="Detter J.C."/>
            <person name="Glavina Del Rio T."/>
            <person name="Hammon N."/>
            <person name="Israni S."/>
            <person name="Dalin E."/>
            <person name="Tice H."/>
            <person name="Pitluck S."/>
            <person name="Chertkov O."/>
            <person name="Brettin T."/>
            <person name="Bruce D."/>
            <person name="Han C."/>
            <person name="Schmutz J."/>
            <person name="Larimer F."/>
            <person name="Land M.L."/>
            <person name="Hauser L."/>
            <person name="Kyrpides N."/>
            <person name="Mikhailova N."/>
            <person name="Ye Q."/>
            <person name="Zhou J."/>
            <person name="Richardson P."/>
            <person name="Fields M.W."/>
        </authorList>
    </citation>
    <scope>NUCLEOTIDE SEQUENCE [LARGE SCALE GENOMIC DNA]</scope>
    <source>
        <strain>QYMF</strain>
    </source>
</reference>
<protein>
    <recommendedName>
        <fullName evidence="1">33 kDa chaperonin</fullName>
    </recommendedName>
    <alternativeName>
        <fullName evidence="1">Heat shock protein 33 homolog</fullName>
        <shortName evidence="1">HSP33</shortName>
    </alternativeName>
</protein>
<name>HSLO_ALKMQ</name>
<feature type="chain" id="PRO_1000057782" description="33 kDa chaperonin">
    <location>
        <begin position="1"/>
        <end position="292"/>
    </location>
</feature>
<feature type="disulfide bond" description="Redox-active" evidence="1">
    <location>
        <begin position="238"/>
        <end position="240"/>
    </location>
</feature>
<feature type="disulfide bond" description="Redox-active" evidence="1">
    <location>
        <begin position="271"/>
        <end position="274"/>
    </location>
</feature>
<proteinExistence type="inferred from homology"/>